<reference key="1">
    <citation type="journal article" date="2000" name="Nature">
        <title>DNA sequence of both chromosomes of the cholera pathogen Vibrio cholerae.</title>
        <authorList>
            <person name="Heidelberg J.F."/>
            <person name="Eisen J.A."/>
            <person name="Nelson W.C."/>
            <person name="Clayton R.A."/>
            <person name="Gwinn M.L."/>
            <person name="Dodson R.J."/>
            <person name="Haft D.H."/>
            <person name="Hickey E.K."/>
            <person name="Peterson J.D."/>
            <person name="Umayam L.A."/>
            <person name="Gill S.R."/>
            <person name="Nelson K.E."/>
            <person name="Read T.D."/>
            <person name="Tettelin H."/>
            <person name="Richardson D.L."/>
            <person name="Ermolaeva M.D."/>
            <person name="Vamathevan J.J."/>
            <person name="Bass S."/>
            <person name="Qin H."/>
            <person name="Dragoi I."/>
            <person name="Sellers P."/>
            <person name="McDonald L.A."/>
            <person name="Utterback T.R."/>
            <person name="Fleischmann R.D."/>
            <person name="Nierman W.C."/>
            <person name="White O."/>
            <person name="Salzberg S.L."/>
            <person name="Smith H.O."/>
            <person name="Colwell R.R."/>
            <person name="Mekalanos J.J."/>
            <person name="Venter J.C."/>
            <person name="Fraser C.M."/>
        </authorList>
    </citation>
    <scope>NUCLEOTIDE SEQUENCE [LARGE SCALE GENOMIC DNA]</scope>
    <source>
        <strain>ATCC 39315 / El Tor Inaba N16961</strain>
    </source>
</reference>
<gene>
    <name evidence="1" type="primary">dxs</name>
    <name type="ordered locus">VC_0889</name>
</gene>
<evidence type="ECO:0000255" key="1">
    <source>
        <dbReference type="HAMAP-Rule" id="MF_00315"/>
    </source>
</evidence>
<name>DXS_VIBCH</name>
<keyword id="KW-0414">Isoprene biosynthesis</keyword>
<keyword id="KW-0460">Magnesium</keyword>
<keyword id="KW-0479">Metal-binding</keyword>
<keyword id="KW-1185">Reference proteome</keyword>
<keyword id="KW-0784">Thiamine biosynthesis</keyword>
<keyword id="KW-0786">Thiamine pyrophosphate</keyword>
<keyword id="KW-0808">Transferase</keyword>
<sequence length="626" mass="68347">MTLDISKYPTLALANTPDELRSLPKEVLPKLCDELRTYLLNSVSQSSGHLASGLGTVELTVALHYVYHTPFDHLIWDVGHQAYPHKILTGRRDQMPTIRQKDGLHPFPWREESEYDTLSVGHSSTSISAALGMAICAGKEGKDRKVVSVIGDGAITAGMAFEAMNHAGDVHPDMLVVLNDNEMSISENVGALNNHLAQVLSGSLYTSIREGGKKVLSGIPPIKELVRRTEEHLKGMVVPGTLFEELGFNYIGPVDGHDVLELIKTLKNMRELKGPQFLHVMTKKGKGYAPAEKDPIGYHGVPKFDPSHHSLPKSSNTKPTFSKIFGDFLCDMAAQDPKLMAITPAMREGSGMVRFSKEYPSQYFDVAIAEQHAVTLATGMAIAGYHPIVAIYSTFLQRGYDQLIHDVAIMNLPVMFAIDRAGIVGADGQTHQGAFDLSYMRCIPNMLIMAPADENECRQMLYTGHQHQGPSAVRYPRGNGMGVELESSFTALEIGKGRLMRESTACEGEKVAILSFGTLLPNALQAAEKLNATVADMRFVKPLDEALIKQLAQTHDVLVTLEENAIAGGAGAGVIEFLMKEKQLKPVLNLGLPDQFIVQGTQEEMHAELGLDGAGIERAIRDYLAK</sequence>
<protein>
    <recommendedName>
        <fullName evidence="1">1-deoxy-D-xylulose-5-phosphate synthase</fullName>
        <ecNumber evidence="1">2.2.1.7</ecNumber>
    </recommendedName>
    <alternativeName>
        <fullName evidence="1">1-deoxyxylulose-5-phosphate synthase</fullName>
        <shortName evidence="1">DXP synthase</shortName>
        <shortName evidence="1">DXPS</shortName>
    </alternativeName>
</protein>
<organism>
    <name type="scientific">Vibrio cholerae serotype O1 (strain ATCC 39315 / El Tor Inaba N16961)</name>
    <dbReference type="NCBI Taxonomy" id="243277"/>
    <lineage>
        <taxon>Bacteria</taxon>
        <taxon>Pseudomonadati</taxon>
        <taxon>Pseudomonadota</taxon>
        <taxon>Gammaproteobacteria</taxon>
        <taxon>Vibrionales</taxon>
        <taxon>Vibrionaceae</taxon>
        <taxon>Vibrio</taxon>
    </lineage>
</organism>
<proteinExistence type="inferred from homology"/>
<comment type="function">
    <text evidence="1">Catalyzes the acyloin condensation reaction between C atoms 2 and 3 of pyruvate and glyceraldehyde 3-phosphate to yield 1-deoxy-D-xylulose-5-phosphate (DXP).</text>
</comment>
<comment type="catalytic activity">
    <reaction evidence="1">
        <text>D-glyceraldehyde 3-phosphate + pyruvate + H(+) = 1-deoxy-D-xylulose 5-phosphate + CO2</text>
        <dbReference type="Rhea" id="RHEA:12605"/>
        <dbReference type="ChEBI" id="CHEBI:15361"/>
        <dbReference type="ChEBI" id="CHEBI:15378"/>
        <dbReference type="ChEBI" id="CHEBI:16526"/>
        <dbReference type="ChEBI" id="CHEBI:57792"/>
        <dbReference type="ChEBI" id="CHEBI:59776"/>
        <dbReference type="EC" id="2.2.1.7"/>
    </reaction>
</comment>
<comment type="cofactor">
    <cofactor evidence="1">
        <name>Mg(2+)</name>
        <dbReference type="ChEBI" id="CHEBI:18420"/>
    </cofactor>
    <text evidence="1">Binds 1 Mg(2+) ion per subunit.</text>
</comment>
<comment type="cofactor">
    <cofactor evidence="1">
        <name>thiamine diphosphate</name>
        <dbReference type="ChEBI" id="CHEBI:58937"/>
    </cofactor>
    <text evidence="1">Binds 1 thiamine pyrophosphate per subunit.</text>
</comment>
<comment type="pathway">
    <text evidence="1">Metabolic intermediate biosynthesis; 1-deoxy-D-xylulose 5-phosphate biosynthesis; 1-deoxy-D-xylulose 5-phosphate from D-glyceraldehyde 3-phosphate and pyruvate: step 1/1.</text>
</comment>
<comment type="subunit">
    <text evidence="1">Homodimer.</text>
</comment>
<comment type="similarity">
    <text evidence="1">Belongs to the transketolase family. DXPS subfamily.</text>
</comment>
<accession>Q9KTL3</accession>
<feature type="chain" id="PRO_0000189169" description="1-deoxy-D-xylulose-5-phosphate synthase">
    <location>
        <begin position="1"/>
        <end position="626"/>
    </location>
</feature>
<feature type="binding site" evidence="1">
    <location>
        <position position="80"/>
    </location>
    <ligand>
        <name>thiamine diphosphate</name>
        <dbReference type="ChEBI" id="CHEBI:58937"/>
    </ligand>
</feature>
<feature type="binding site" evidence="1">
    <location>
        <begin position="121"/>
        <end position="123"/>
    </location>
    <ligand>
        <name>thiamine diphosphate</name>
        <dbReference type="ChEBI" id="CHEBI:58937"/>
    </ligand>
</feature>
<feature type="binding site" evidence="1">
    <location>
        <position position="152"/>
    </location>
    <ligand>
        <name>Mg(2+)</name>
        <dbReference type="ChEBI" id="CHEBI:18420"/>
    </ligand>
</feature>
<feature type="binding site" evidence="1">
    <location>
        <begin position="153"/>
        <end position="154"/>
    </location>
    <ligand>
        <name>thiamine diphosphate</name>
        <dbReference type="ChEBI" id="CHEBI:58937"/>
    </ligand>
</feature>
<feature type="binding site" evidence="1">
    <location>
        <position position="181"/>
    </location>
    <ligand>
        <name>Mg(2+)</name>
        <dbReference type="ChEBI" id="CHEBI:18420"/>
    </ligand>
</feature>
<feature type="binding site" evidence="1">
    <location>
        <position position="181"/>
    </location>
    <ligand>
        <name>thiamine diphosphate</name>
        <dbReference type="ChEBI" id="CHEBI:58937"/>
    </ligand>
</feature>
<feature type="binding site" evidence="1">
    <location>
        <position position="288"/>
    </location>
    <ligand>
        <name>thiamine diphosphate</name>
        <dbReference type="ChEBI" id="CHEBI:58937"/>
    </ligand>
</feature>
<feature type="binding site" evidence="1">
    <location>
        <position position="370"/>
    </location>
    <ligand>
        <name>thiamine diphosphate</name>
        <dbReference type="ChEBI" id="CHEBI:58937"/>
    </ligand>
</feature>
<dbReference type="EC" id="2.2.1.7" evidence="1"/>
<dbReference type="EMBL" id="AE003852">
    <property type="protein sequence ID" value="AAF94051.1"/>
    <property type="molecule type" value="Genomic_DNA"/>
</dbReference>
<dbReference type="PIR" id="H82266">
    <property type="entry name" value="H82266"/>
</dbReference>
<dbReference type="RefSeq" id="NP_230536.1">
    <property type="nucleotide sequence ID" value="NC_002505.1"/>
</dbReference>
<dbReference type="RefSeq" id="WP_000171170.1">
    <property type="nucleotide sequence ID" value="NZ_LT906614.1"/>
</dbReference>
<dbReference type="SMR" id="Q9KTL3"/>
<dbReference type="STRING" id="243277.VC_0889"/>
<dbReference type="DNASU" id="2614118"/>
<dbReference type="EnsemblBacteria" id="AAF94051">
    <property type="protein sequence ID" value="AAF94051"/>
    <property type="gene ID" value="VC_0889"/>
</dbReference>
<dbReference type="KEGG" id="vch:VC_0889"/>
<dbReference type="PATRIC" id="fig|243277.26.peg.846"/>
<dbReference type="eggNOG" id="COG1154">
    <property type="taxonomic scope" value="Bacteria"/>
</dbReference>
<dbReference type="HOGENOM" id="CLU_009227_1_4_6"/>
<dbReference type="UniPathway" id="UPA00064">
    <property type="reaction ID" value="UER00091"/>
</dbReference>
<dbReference type="Proteomes" id="UP000000584">
    <property type="component" value="Chromosome 1"/>
</dbReference>
<dbReference type="GO" id="GO:0005829">
    <property type="term" value="C:cytosol"/>
    <property type="evidence" value="ECO:0000318"/>
    <property type="project" value="GO_Central"/>
</dbReference>
<dbReference type="GO" id="GO:0008661">
    <property type="term" value="F:1-deoxy-D-xylulose-5-phosphate synthase activity"/>
    <property type="evidence" value="ECO:0000318"/>
    <property type="project" value="GO_Central"/>
</dbReference>
<dbReference type="GO" id="GO:0000287">
    <property type="term" value="F:magnesium ion binding"/>
    <property type="evidence" value="ECO:0007669"/>
    <property type="project" value="UniProtKB-UniRule"/>
</dbReference>
<dbReference type="GO" id="GO:0030976">
    <property type="term" value="F:thiamine pyrophosphate binding"/>
    <property type="evidence" value="ECO:0007669"/>
    <property type="project" value="UniProtKB-UniRule"/>
</dbReference>
<dbReference type="GO" id="GO:0052865">
    <property type="term" value="P:1-deoxy-D-xylulose 5-phosphate biosynthetic process"/>
    <property type="evidence" value="ECO:0007669"/>
    <property type="project" value="UniProtKB-UniPathway"/>
</dbReference>
<dbReference type="GO" id="GO:0019288">
    <property type="term" value="P:isopentenyl diphosphate biosynthetic process, methylerythritol 4-phosphate pathway"/>
    <property type="evidence" value="ECO:0000318"/>
    <property type="project" value="GO_Central"/>
</dbReference>
<dbReference type="GO" id="GO:0016114">
    <property type="term" value="P:terpenoid biosynthetic process"/>
    <property type="evidence" value="ECO:0007669"/>
    <property type="project" value="UniProtKB-UniRule"/>
</dbReference>
<dbReference type="GO" id="GO:0009228">
    <property type="term" value="P:thiamine biosynthetic process"/>
    <property type="evidence" value="ECO:0007669"/>
    <property type="project" value="UniProtKB-UniRule"/>
</dbReference>
<dbReference type="CDD" id="cd02007">
    <property type="entry name" value="TPP_DXS"/>
    <property type="match status" value="1"/>
</dbReference>
<dbReference type="CDD" id="cd07033">
    <property type="entry name" value="TPP_PYR_DXS_TK_like"/>
    <property type="match status" value="1"/>
</dbReference>
<dbReference type="FunFam" id="3.40.50.920:FF:000002">
    <property type="entry name" value="1-deoxy-D-xylulose-5-phosphate synthase"/>
    <property type="match status" value="1"/>
</dbReference>
<dbReference type="FunFam" id="3.40.50.970:FF:000005">
    <property type="entry name" value="1-deoxy-D-xylulose-5-phosphate synthase"/>
    <property type="match status" value="1"/>
</dbReference>
<dbReference type="Gene3D" id="3.40.50.920">
    <property type="match status" value="1"/>
</dbReference>
<dbReference type="Gene3D" id="3.40.50.970">
    <property type="match status" value="2"/>
</dbReference>
<dbReference type="HAMAP" id="MF_00315">
    <property type="entry name" value="DXP_synth"/>
    <property type="match status" value="1"/>
</dbReference>
<dbReference type="InterPro" id="IPR005477">
    <property type="entry name" value="Dxylulose-5-P_synthase"/>
</dbReference>
<dbReference type="InterPro" id="IPR029061">
    <property type="entry name" value="THDP-binding"/>
</dbReference>
<dbReference type="InterPro" id="IPR009014">
    <property type="entry name" value="Transketo_C/PFOR_II"/>
</dbReference>
<dbReference type="InterPro" id="IPR005475">
    <property type="entry name" value="Transketolase-like_Pyr-bd"/>
</dbReference>
<dbReference type="InterPro" id="IPR020826">
    <property type="entry name" value="Transketolase_BS"/>
</dbReference>
<dbReference type="InterPro" id="IPR033248">
    <property type="entry name" value="Transketolase_C"/>
</dbReference>
<dbReference type="InterPro" id="IPR049557">
    <property type="entry name" value="Transketolase_CS"/>
</dbReference>
<dbReference type="NCBIfam" id="TIGR00204">
    <property type="entry name" value="dxs"/>
    <property type="match status" value="1"/>
</dbReference>
<dbReference type="NCBIfam" id="NF003933">
    <property type="entry name" value="PRK05444.2-2"/>
    <property type="match status" value="1"/>
</dbReference>
<dbReference type="PANTHER" id="PTHR43322">
    <property type="entry name" value="1-D-DEOXYXYLULOSE 5-PHOSPHATE SYNTHASE-RELATED"/>
    <property type="match status" value="1"/>
</dbReference>
<dbReference type="PANTHER" id="PTHR43322:SF5">
    <property type="entry name" value="1-DEOXY-D-XYLULOSE-5-PHOSPHATE SYNTHASE, CHLOROPLASTIC"/>
    <property type="match status" value="1"/>
</dbReference>
<dbReference type="Pfam" id="PF13292">
    <property type="entry name" value="DXP_synthase_N"/>
    <property type="match status" value="1"/>
</dbReference>
<dbReference type="Pfam" id="PF02779">
    <property type="entry name" value="Transket_pyr"/>
    <property type="match status" value="1"/>
</dbReference>
<dbReference type="Pfam" id="PF02780">
    <property type="entry name" value="Transketolase_C"/>
    <property type="match status" value="1"/>
</dbReference>
<dbReference type="SMART" id="SM00861">
    <property type="entry name" value="Transket_pyr"/>
    <property type="match status" value="1"/>
</dbReference>
<dbReference type="SUPFAM" id="SSF52518">
    <property type="entry name" value="Thiamin diphosphate-binding fold (THDP-binding)"/>
    <property type="match status" value="2"/>
</dbReference>
<dbReference type="SUPFAM" id="SSF52922">
    <property type="entry name" value="TK C-terminal domain-like"/>
    <property type="match status" value="1"/>
</dbReference>
<dbReference type="PROSITE" id="PS00801">
    <property type="entry name" value="TRANSKETOLASE_1"/>
    <property type="match status" value="1"/>
</dbReference>
<dbReference type="PROSITE" id="PS00802">
    <property type="entry name" value="TRANSKETOLASE_2"/>
    <property type="match status" value="1"/>
</dbReference>